<sequence length="222" mass="25646">MAAEVILLGFWPSMFGMRTMIALEEKGVKYEYREEDVINNKSPLLLEMNPIHKTIPVLIHNGKPVLESLIQIQYIDEVWSDNNSFLPSDPYHRAQALFWADFIDKKEQLYVCGRKTWATKGEELEAANKEFIEILKTLQCELGEKPYFGGDKFGFVDIVLIGFYSWFPAYQKFGNFSIEPECLKLIAWGKRCMQRESVAKALPDSEKVVGYVLQLKKLYGIE</sequence>
<gene>
    <name type="primary">GSTU21</name>
    <name type="ordered locus">At1g78360</name>
    <name type="ORF">F3F9.24</name>
</gene>
<comment type="function">
    <text evidence="1">May be involved in the conjugation of reduced glutathione to a wide number of exogenous and endogenous hydrophobic electrophiles and have a detoxification role against certain herbicides.</text>
</comment>
<comment type="catalytic activity">
    <reaction>
        <text>RX + glutathione = an S-substituted glutathione + a halide anion + H(+)</text>
        <dbReference type="Rhea" id="RHEA:16437"/>
        <dbReference type="ChEBI" id="CHEBI:15378"/>
        <dbReference type="ChEBI" id="CHEBI:16042"/>
        <dbReference type="ChEBI" id="CHEBI:17792"/>
        <dbReference type="ChEBI" id="CHEBI:57925"/>
        <dbReference type="ChEBI" id="CHEBI:90779"/>
        <dbReference type="EC" id="2.5.1.18"/>
    </reaction>
</comment>
<comment type="subcellular location">
    <subcellularLocation>
        <location evidence="2">Cytoplasm</location>
        <location evidence="2">Cytosol</location>
    </subcellularLocation>
</comment>
<comment type="similarity">
    <text evidence="2">Belongs to the GST superfamily. Tau family.</text>
</comment>
<keyword id="KW-0963">Cytoplasm</keyword>
<keyword id="KW-0216">Detoxification</keyword>
<keyword id="KW-1185">Reference proteome</keyword>
<keyword id="KW-0808">Transferase</keyword>
<evidence type="ECO:0000250" key="1"/>
<evidence type="ECO:0000305" key="2"/>
<feature type="chain" id="PRO_0000413566" description="Glutathione S-transferase U21">
    <location>
        <begin position="1"/>
        <end position="222"/>
    </location>
</feature>
<feature type="domain" description="GST N-terminal">
    <location>
        <begin position="3"/>
        <end position="83"/>
    </location>
</feature>
<feature type="domain" description="GST C-terminal">
    <location>
        <begin position="89"/>
        <end position="211"/>
    </location>
</feature>
<feature type="binding site" evidence="1">
    <location>
        <begin position="13"/>
        <end position="14"/>
    </location>
    <ligand>
        <name>glutathione</name>
        <dbReference type="ChEBI" id="CHEBI:57925"/>
    </ligand>
</feature>
<feature type="binding site" evidence="1">
    <location>
        <begin position="40"/>
        <end position="41"/>
    </location>
    <ligand>
        <name>glutathione</name>
        <dbReference type="ChEBI" id="CHEBI:57925"/>
    </ligand>
</feature>
<feature type="binding site" evidence="1">
    <location>
        <begin position="54"/>
        <end position="55"/>
    </location>
    <ligand>
        <name>glutathione</name>
        <dbReference type="ChEBI" id="CHEBI:57925"/>
    </ligand>
</feature>
<feature type="binding site" evidence="1">
    <location>
        <begin position="67"/>
        <end position="68"/>
    </location>
    <ligand>
        <name>glutathione</name>
        <dbReference type="ChEBI" id="CHEBI:57925"/>
    </ligand>
</feature>
<proteinExistence type="inferred from homology"/>
<dbReference type="EC" id="2.5.1.18"/>
<dbReference type="EMBL" id="AC013430">
    <property type="status" value="NOT_ANNOTATED_CDS"/>
    <property type="molecule type" value="Genomic_DNA"/>
</dbReference>
<dbReference type="EMBL" id="CP002684">
    <property type="status" value="NOT_ANNOTATED_CDS"/>
    <property type="molecule type" value="Genomic_DNA"/>
</dbReference>
<dbReference type="SMR" id="F4IA73"/>
<dbReference type="FunCoup" id="F4IA73">
    <property type="interactions" value="26"/>
</dbReference>
<dbReference type="STRING" id="3702.F4IA73"/>
<dbReference type="MetOSite" id="F4IA73"/>
<dbReference type="PaxDb" id="3702-AT1G78360.1"/>
<dbReference type="ProteomicsDB" id="248498"/>
<dbReference type="Araport" id="AT1G78360"/>
<dbReference type="TAIR" id="AT1G78360">
    <property type="gene designation" value="GSTU21"/>
</dbReference>
<dbReference type="eggNOG" id="KOG0406">
    <property type="taxonomic scope" value="Eukaryota"/>
</dbReference>
<dbReference type="HOGENOM" id="CLU_011226_18_2_1"/>
<dbReference type="InParanoid" id="F4IA73"/>
<dbReference type="OrthoDB" id="202840at2759"/>
<dbReference type="PhylomeDB" id="F4IA73"/>
<dbReference type="PRO" id="PR:F4IA73"/>
<dbReference type="Proteomes" id="UP000006548">
    <property type="component" value="Chromosome 1"/>
</dbReference>
<dbReference type="ExpressionAtlas" id="F4IA73">
    <property type="expression patterns" value="baseline and differential"/>
</dbReference>
<dbReference type="GO" id="GO:0005737">
    <property type="term" value="C:cytoplasm"/>
    <property type="evidence" value="ECO:0000318"/>
    <property type="project" value="GO_Central"/>
</dbReference>
<dbReference type="GO" id="GO:0005829">
    <property type="term" value="C:cytosol"/>
    <property type="evidence" value="ECO:0007669"/>
    <property type="project" value="UniProtKB-SubCell"/>
</dbReference>
<dbReference type="GO" id="GO:0004364">
    <property type="term" value="F:glutathione transferase activity"/>
    <property type="evidence" value="ECO:0000318"/>
    <property type="project" value="GO_Central"/>
</dbReference>
<dbReference type="GO" id="GO:0006749">
    <property type="term" value="P:glutathione metabolic process"/>
    <property type="evidence" value="ECO:0000318"/>
    <property type="project" value="GO_Central"/>
</dbReference>
<dbReference type="GO" id="GO:0009407">
    <property type="term" value="P:toxin catabolic process"/>
    <property type="evidence" value="ECO:0000304"/>
    <property type="project" value="TAIR"/>
</dbReference>
<dbReference type="CDD" id="cd03185">
    <property type="entry name" value="GST_C_Tau"/>
    <property type="match status" value="1"/>
</dbReference>
<dbReference type="CDD" id="cd03058">
    <property type="entry name" value="GST_N_Tau"/>
    <property type="match status" value="1"/>
</dbReference>
<dbReference type="FunFam" id="1.20.1050.10:FF:000018">
    <property type="entry name" value="Glutathione S-transferase U20"/>
    <property type="match status" value="1"/>
</dbReference>
<dbReference type="FunFam" id="3.40.30.10:FF:000014">
    <property type="entry name" value="Tau class glutathione S-transferase"/>
    <property type="match status" value="1"/>
</dbReference>
<dbReference type="Gene3D" id="1.20.1050.10">
    <property type="match status" value="1"/>
</dbReference>
<dbReference type="Gene3D" id="3.40.30.10">
    <property type="entry name" value="Glutaredoxin"/>
    <property type="match status" value="1"/>
</dbReference>
<dbReference type="InterPro" id="IPR010987">
    <property type="entry name" value="Glutathione-S-Trfase_C-like"/>
</dbReference>
<dbReference type="InterPro" id="IPR036282">
    <property type="entry name" value="Glutathione-S-Trfase_C_sf"/>
</dbReference>
<dbReference type="InterPro" id="IPR004045">
    <property type="entry name" value="Glutathione_S-Trfase_N"/>
</dbReference>
<dbReference type="InterPro" id="IPR004046">
    <property type="entry name" value="GST_C"/>
</dbReference>
<dbReference type="InterPro" id="IPR045074">
    <property type="entry name" value="GST_C_Tau"/>
</dbReference>
<dbReference type="InterPro" id="IPR045073">
    <property type="entry name" value="Omega/Tau-like"/>
</dbReference>
<dbReference type="InterPro" id="IPR036249">
    <property type="entry name" value="Thioredoxin-like_sf"/>
</dbReference>
<dbReference type="PANTHER" id="PTHR11260:SF754">
    <property type="entry name" value="GLUTATHIONE S-TRANSFERASE U21"/>
    <property type="match status" value="1"/>
</dbReference>
<dbReference type="PANTHER" id="PTHR11260">
    <property type="entry name" value="GLUTATHIONE S-TRANSFERASE, GST, SUPERFAMILY, GST DOMAIN CONTAINING"/>
    <property type="match status" value="1"/>
</dbReference>
<dbReference type="Pfam" id="PF00043">
    <property type="entry name" value="GST_C"/>
    <property type="match status" value="1"/>
</dbReference>
<dbReference type="Pfam" id="PF02798">
    <property type="entry name" value="GST_N"/>
    <property type="match status" value="1"/>
</dbReference>
<dbReference type="SFLD" id="SFLDG01152">
    <property type="entry name" value="Main.3:_Omega-_and_Tau-like"/>
    <property type="match status" value="1"/>
</dbReference>
<dbReference type="SFLD" id="SFLDG00358">
    <property type="entry name" value="Main_(cytGST)"/>
    <property type="match status" value="1"/>
</dbReference>
<dbReference type="SUPFAM" id="SSF47616">
    <property type="entry name" value="GST C-terminal domain-like"/>
    <property type="match status" value="1"/>
</dbReference>
<dbReference type="SUPFAM" id="SSF52833">
    <property type="entry name" value="Thioredoxin-like"/>
    <property type="match status" value="1"/>
</dbReference>
<dbReference type="PROSITE" id="PS50405">
    <property type="entry name" value="GST_CTER"/>
    <property type="match status" value="1"/>
</dbReference>
<dbReference type="PROSITE" id="PS50404">
    <property type="entry name" value="GST_NTER"/>
    <property type="match status" value="1"/>
</dbReference>
<organism>
    <name type="scientific">Arabidopsis thaliana</name>
    <name type="common">Mouse-ear cress</name>
    <dbReference type="NCBI Taxonomy" id="3702"/>
    <lineage>
        <taxon>Eukaryota</taxon>
        <taxon>Viridiplantae</taxon>
        <taxon>Streptophyta</taxon>
        <taxon>Embryophyta</taxon>
        <taxon>Tracheophyta</taxon>
        <taxon>Spermatophyta</taxon>
        <taxon>Magnoliopsida</taxon>
        <taxon>eudicotyledons</taxon>
        <taxon>Gunneridae</taxon>
        <taxon>Pentapetalae</taxon>
        <taxon>rosids</taxon>
        <taxon>malvids</taxon>
        <taxon>Brassicales</taxon>
        <taxon>Brassicaceae</taxon>
        <taxon>Camelineae</taxon>
        <taxon>Arabidopsis</taxon>
    </lineage>
</organism>
<name>GSTUL_ARATH</name>
<protein>
    <recommendedName>
        <fullName>Glutathione S-transferase U21</fullName>
        <shortName>AtGSTU21</shortName>
        <ecNumber>2.5.1.18</ecNumber>
    </recommendedName>
    <alternativeName>
        <fullName>GST class-tau member 21</fullName>
    </alternativeName>
</protein>
<accession>F4IA73</accession>
<reference key="1">
    <citation type="journal article" date="2000" name="Nature">
        <title>Sequence and analysis of chromosome 1 of the plant Arabidopsis thaliana.</title>
        <authorList>
            <person name="Theologis A."/>
            <person name="Ecker J.R."/>
            <person name="Palm C.J."/>
            <person name="Federspiel N.A."/>
            <person name="Kaul S."/>
            <person name="White O."/>
            <person name="Alonso J."/>
            <person name="Altafi H."/>
            <person name="Araujo R."/>
            <person name="Bowman C.L."/>
            <person name="Brooks S.Y."/>
            <person name="Buehler E."/>
            <person name="Chan A."/>
            <person name="Chao Q."/>
            <person name="Chen H."/>
            <person name="Cheuk R.F."/>
            <person name="Chin C.W."/>
            <person name="Chung M.K."/>
            <person name="Conn L."/>
            <person name="Conway A.B."/>
            <person name="Conway A.R."/>
            <person name="Creasy T.H."/>
            <person name="Dewar K."/>
            <person name="Dunn P."/>
            <person name="Etgu P."/>
            <person name="Feldblyum T.V."/>
            <person name="Feng J.-D."/>
            <person name="Fong B."/>
            <person name="Fujii C.Y."/>
            <person name="Gill J.E."/>
            <person name="Goldsmith A.D."/>
            <person name="Haas B."/>
            <person name="Hansen N.F."/>
            <person name="Hughes B."/>
            <person name="Huizar L."/>
            <person name="Hunter J.L."/>
            <person name="Jenkins J."/>
            <person name="Johnson-Hopson C."/>
            <person name="Khan S."/>
            <person name="Khaykin E."/>
            <person name="Kim C.J."/>
            <person name="Koo H.L."/>
            <person name="Kremenetskaia I."/>
            <person name="Kurtz D.B."/>
            <person name="Kwan A."/>
            <person name="Lam B."/>
            <person name="Langin-Hooper S."/>
            <person name="Lee A."/>
            <person name="Lee J.M."/>
            <person name="Lenz C.A."/>
            <person name="Li J.H."/>
            <person name="Li Y.-P."/>
            <person name="Lin X."/>
            <person name="Liu S.X."/>
            <person name="Liu Z.A."/>
            <person name="Luros J.S."/>
            <person name="Maiti R."/>
            <person name="Marziali A."/>
            <person name="Militscher J."/>
            <person name="Miranda M."/>
            <person name="Nguyen M."/>
            <person name="Nierman W.C."/>
            <person name="Osborne B.I."/>
            <person name="Pai G."/>
            <person name="Peterson J."/>
            <person name="Pham P.K."/>
            <person name="Rizzo M."/>
            <person name="Rooney T."/>
            <person name="Rowley D."/>
            <person name="Sakano H."/>
            <person name="Salzberg S.L."/>
            <person name="Schwartz J.R."/>
            <person name="Shinn P."/>
            <person name="Southwick A.M."/>
            <person name="Sun H."/>
            <person name="Tallon L.J."/>
            <person name="Tambunga G."/>
            <person name="Toriumi M.J."/>
            <person name="Town C.D."/>
            <person name="Utterback T."/>
            <person name="Van Aken S."/>
            <person name="Vaysberg M."/>
            <person name="Vysotskaia V.S."/>
            <person name="Walker M."/>
            <person name="Wu D."/>
            <person name="Yu G."/>
            <person name="Fraser C.M."/>
            <person name="Venter J.C."/>
            <person name="Davis R.W."/>
        </authorList>
    </citation>
    <scope>NUCLEOTIDE SEQUENCE [LARGE SCALE GENOMIC DNA]</scope>
    <source>
        <strain>cv. Columbia</strain>
    </source>
</reference>
<reference key="2">
    <citation type="journal article" date="2017" name="Plant J.">
        <title>Araport11: a complete reannotation of the Arabidopsis thaliana reference genome.</title>
        <authorList>
            <person name="Cheng C.Y."/>
            <person name="Krishnakumar V."/>
            <person name="Chan A.P."/>
            <person name="Thibaud-Nissen F."/>
            <person name="Schobel S."/>
            <person name="Town C.D."/>
        </authorList>
    </citation>
    <scope>GENOME REANNOTATION</scope>
    <source>
        <strain>cv. Columbia</strain>
    </source>
</reference>
<reference key="3">
    <citation type="journal article" date="2002" name="Plant Mol. Biol.">
        <title>Probing the diversity of the Arabidopsis glutathione S-transferase gene family.</title>
        <authorList>
            <person name="Wagner U."/>
            <person name="Edwards R."/>
            <person name="Dixon D.P."/>
            <person name="Mauch F."/>
        </authorList>
    </citation>
    <scope>GENE FAMILY</scope>
    <scope>NOMENCLATURE</scope>
</reference>